<dbReference type="EC" id="6.3.4.4" evidence="1"/>
<dbReference type="EMBL" id="CP000478">
    <property type="protein sequence ID" value="ABK16963.1"/>
    <property type="molecule type" value="Genomic_DNA"/>
</dbReference>
<dbReference type="RefSeq" id="WP_011698134.1">
    <property type="nucleotide sequence ID" value="NC_008554.1"/>
</dbReference>
<dbReference type="SMR" id="A0LHR1"/>
<dbReference type="FunCoup" id="A0LHR1">
    <property type="interactions" value="594"/>
</dbReference>
<dbReference type="STRING" id="335543.Sfum_1271"/>
<dbReference type="KEGG" id="sfu:Sfum_1271"/>
<dbReference type="eggNOG" id="COG0104">
    <property type="taxonomic scope" value="Bacteria"/>
</dbReference>
<dbReference type="HOGENOM" id="CLU_029848_0_0_7"/>
<dbReference type="InParanoid" id="A0LHR1"/>
<dbReference type="OrthoDB" id="9807553at2"/>
<dbReference type="UniPathway" id="UPA00075">
    <property type="reaction ID" value="UER00335"/>
</dbReference>
<dbReference type="Proteomes" id="UP000001784">
    <property type="component" value="Chromosome"/>
</dbReference>
<dbReference type="GO" id="GO:0005737">
    <property type="term" value="C:cytoplasm"/>
    <property type="evidence" value="ECO:0007669"/>
    <property type="project" value="UniProtKB-SubCell"/>
</dbReference>
<dbReference type="GO" id="GO:0004019">
    <property type="term" value="F:adenylosuccinate synthase activity"/>
    <property type="evidence" value="ECO:0007669"/>
    <property type="project" value="UniProtKB-UniRule"/>
</dbReference>
<dbReference type="GO" id="GO:0005525">
    <property type="term" value="F:GTP binding"/>
    <property type="evidence" value="ECO:0007669"/>
    <property type="project" value="UniProtKB-UniRule"/>
</dbReference>
<dbReference type="GO" id="GO:0000287">
    <property type="term" value="F:magnesium ion binding"/>
    <property type="evidence" value="ECO:0007669"/>
    <property type="project" value="UniProtKB-UniRule"/>
</dbReference>
<dbReference type="GO" id="GO:0044208">
    <property type="term" value="P:'de novo' AMP biosynthetic process"/>
    <property type="evidence" value="ECO:0007669"/>
    <property type="project" value="UniProtKB-UniRule"/>
</dbReference>
<dbReference type="GO" id="GO:0046040">
    <property type="term" value="P:IMP metabolic process"/>
    <property type="evidence" value="ECO:0007669"/>
    <property type="project" value="TreeGrafter"/>
</dbReference>
<dbReference type="CDD" id="cd03108">
    <property type="entry name" value="AdSS"/>
    <property type="match status" value="1"/>
</dbReference>
<dbReference type="FunFam" id="1.10.300.10:FF:000001">
    <property type="entry name" value="Adenylosuccinate synthetase"/>
    <property type="match status" value="1"/>
</dbReference>
<dbReference type="FunFam" id="3.90.170.10:FF:000001">
    <property type="entry name" value="Adenylosuccinate synthetase"/>
    <property type="match status" value="1"/>
</dbReference>
<dbReference type="Gene3D" id="3.40.440.10">
    <property type="entry name" value="Adenylosuccinate Synthetase, subunit A, domain 1"/>
    <property type="match status" value="1"/>
</dbReference>
<dbReference type="Gene3D" id="1.10.300.10">
    <property type="entry name" value="Adenylosuccinate Synthetase, subunit A, domain 2"/>
    <property type="match status" value="1"/>
</dbReference>
<dbReference type="Gene3D" id="3.90.170.10">
    <property type="entry name" value="Adenylosuccinate Synthetase, subunit A, domain 3"/>
    <property type="match status" value="1"/>
</dbReference>
<dbReference type="HAMAP" id="MF_00011">
    <property type="entry name" value="Adenylosucc_synth"/>
    <property type="match status" value="1"/>
</dbReference>
<dbReference type="InterPro" id="IPR018220">
    <property type="entry name" value="Adenylosuccin_syn_GTP-bd"/>
</dbReference>
<dbReference type="InterPro" id="IPR033128">
    <property type="entry name" value="Adenylosuccin_syn_Lys_AS"/>
</dbReference>
<dbReference type="InterPro" id="IPR042109">
    <property type="entry name" value="Adenylosuccinate_synth_dom1"/>
</dbReference>
<dbReference type="InterPro" id="IPR042110">
    <property type="entry name" value="Adenylosuccinate_synth_dom2"/>
</dbReference>
<dbReference type="InterPro" id="IPR042111">
    <property type="entry name" value="Adenylosuccinate_synth_dom3"/>
</dbReference>
<dbReference type="InterPro" id="IPR001114">
    <property type="entry name" value="Adenylosuccinate_synthetase"/>
</dbReference>
<dbReference type="InterPro" id="IPR027417">
    <property type="entry name" value="P-loop_NTPase"/>
</dbReference>
<dbReference type="NCBIfam" id="NF002223">
    <property type="entry name" value="PRK01117.1"/>
    <property type="match status" value="1"/>
</dbReference>
<dbReference type="NCBIfam" id="TIGR00184">
    <property type="entry name" value="purA"/>
    <property type="match status" value="1"/>
</dbReference>
<dbReference type="PANTHER" id="PTHR11846">
    <property type="entry name" value="ADENYLOSUCCINATE SYNTHETASE"/>
    <property type="match status" value="1"/>
</dbReference>
<dbReference type="PANTHER" id="PTHR11846:SF0">
    <property type="entry name" value="ADENYLOSUCCINATE SYNTHETASE"/>
    <property type="match status" value="1"/>
</dbReference>
<dbReference type="Pfam" id="PF00709">
    <property type="entry name" value="Adenylsucc_synt"/>
    <property type="match status" value="1"/>
</dbReference>
<dbReference type="SMART" id="SM00788">
    <property type="entry name" value="Adenylsucc_synt"/>
    <property type="match status" value="1"/>
</dbReference>
<dbReference type="SUPFAM" id="SSF52540">
    <property type="entry name" value="P-loop containing nucleoside triphosphate hydrolases"/>
    <property type="match status" value="1"/>
</dbReference>
<dbReference type="PROSITE" id="PS01266">
    <property type="entry name" value="ADENYLOSUCCIN_SYN_1"/>
    <property type="match status" value="1"/>
</dbReference>
<dbReference type="PROSITE" id="PS00513">
    <property type="entry name" value="ADENYLOSUCCIN_SYN_2"/>
    <property type="match status" value="1"/>
</dbReference>
<protein>
    <recommendedName>
        <fullName evidence="1">Adenylosuccinate synthetase</fullName>
        <shortName evidence="1">AMPSase</shortName>
        <shortName evidence="1">AdSS</shortName>
        <ecNumber evidence="1">6.3.4.4</ecNumber>
    </recommendedName>
    <alternativeName>
        <fullName evidence="1">IMP--aspartate ligase</fullName>
    </alternativeName>
</protein>
<reference key="1">
    <citation type="submission" date="2006-10" db="EMBL/GenBank/DDBJ databases">
        <title>Complete sequence of Syntrophobacter fumaroxidans MPOB.</title>
        <authorList>
            <consortium name="US DOE Joint Genome Institute"/>
            <person name="Copeland A."/>
            <person name="Lucas S."/>
            <person name="Lapidus A."/>
            <person name="Barry K."/>
            <person name="Detter J.C."/>
            <person name="Glavina del Rio T."/>
            <person name="Hammon N."/>
            <person name="Israni S."/>
            <person name="Pitluck S."/>
            <person name="Goltsman E.G."/>
            <person name="Martinez M."/>
            <person name="Schmutz J."/>
            <person name="Larimer F."/>
            <person name="Land M."/>
            <person name="Hauser L."/>
            <person name="Kyrpides N."/>
            <person name="Kim E."/>
            <person name="Boone D.R."/>
            <person name="Brockman F."/>
            <person name="Culley D."/>
            <person name="Ferry J."/>
            <person name="Gunsalus R."/>
            <person name="McInerney M.J."/>
            <person name="Morrison M."/>
            <person name="Plugge C."/>
            <person name="Rohlin L."/>
            <person name="Scholten J."/>
            <person name="Sieber J."/>
            <person name="Stams A.J.M."/>
            <person name="Worm P."/>
            <person name="Henstra A.M."/>
            <person name="Richardson P."/>
        </authorList>
    </citation>
    <scope>NUCLEOTIDE SEQUENCE [LARGE SCALE GENOMIC DNA]</scope>
    <source>
        <strain>DSM 10017 / MPOB</strain>
    </source>
</reference>
<gene>
    <name evidence="1" type="primary">purA</name>
    <name type="ordered locus">Sfum_1271</name>
</gene>
<accession>A0LHR1</accession>
<evidence type="ECO:0000255" key="1">
    <source>
        <dbReference type="HAMAP-Rule" id="MF_00011"/>
    </source>
</evidence>
<sequence>MANVVIVGSQWGDEGKGKIVDLFTEKADYVVRFQGGNNAGHTLVVNGEKHIFHLVPSGILHKGKVCMIGNGVVVDPGVLIREMDRLHEAGIPVTRENLLISRYAHVIMPYHRAMDNARENRKGKTKIGTTGRGIGPCYEDKVARCGVRIHDLSDPKTLGEKIRRNLEEKNFLLERFFGEKPLDAAAMEQEYLAYGERLAPLVDNVSERLQEAVREGRNILFEGAQGTHLDIDHGTYPFVTSSNTVAGNAACGSGIGPTRIDRVLGVVKAYTTRVGGGPFPSELLDETGERMRTRGGEFGATTGRPRRCGWLDMVVVKTAIRLNGLSGLLITKLDVLTGIPKLKIVTSYKCGPRKIEFMPPELEALEACEPVYEEFHGWEEDIGSVRKFTDLPVNTRRYLQALEEMAGVPLMVVSVGPARDETIVLEYPF</sequence>
<keyword id="KW-0963">Cytoplasm</keyword>
<keyword id="KW-0342">GTP-binding</keyword>
<keyword id="KW-0436">Ligase</keyword>
<keyword id="KW-0460">Magnesium</keyword>
<keyword id="KW-0479">Metal-binding</keyword>
<keyword id="KW-0547">Nucleotide-binding</keyword>
<keyword id="KW-0658">Purine biosynthesis</keyword>
<keyword id="KW-1185">Reference proteome</keyword>
<proteinExistence type="inferred from homology"/>
<name>PURA_SYNFM</name>
<organism>
    <name type="scientific">Syntrophobacter fumaroxidans (strain DSM 10017 / MPOB)</name>
    <dbReference type="NCBI Taxonomy" id="335543"/>
    <lineage>
        <taxon>Bacteria</taxon>
        <taxon>Pseudomonadati</taxon>
        <taxon>Thermodesulfobacteriota</taxon>
        <taxon>Syntrophobacteria</taxon>
        <taxon>Syntrophobacterales</taxon>
        <taxon>Syntrophobacteraceae</taxon>
        <taxon>Syntrophobacter</taxon>
    </lineage>
</organism>
<comment type="function">
    <text evidence="1">Plays an important role in the de novo pathway of purine nucleotide biosynthesis. Catalyzes the first committed step in the biosynthesis of AMP from IMP.</text>
</comment>
<comment type="catalytic activity">
    <reaction evidence="1">
        <text>IMP + L-aspartate + GTP = N(6)-(1,2-dicarboxyethyl)-AMP + GDP + phosphate + 2 H(+)</text>
        <dbReference type="Rhea" id="RHEA:15753"/>
        <dbReference type="ChEBI" id="CHEBI:15378"/>
        <dbReference type="ChEBI" id="CHEBI:29991"/>
        <dbReference type="ChEBI" id="CHEBI:37565"/>
        <dbReference type="ChEBI" id="CHEBI:43474"/>
        <dbReference type="ChEBI" id="CHEBI:57567"/>
        <dbReference type="ChEBI" id="CHEBI:58053"/>
        <dbReference type="ChEBI" id="CHEBI:58189"/>
        <dbReference type="EC" id="6.3.4.4"/>
    </reaction>
</comment>
<comment type="cofactor">
    <cofactor evidence="1">
        <name>Mg(2+)</name>
        <dbReference type="ChEBI" id="CHEBI:18420"/>
    </cofactor>
    <text evidence="1">Binds 1 Mg(2+) ion per subunit.</text>
</comment>
<comment type="pathway">
    <text evidence="1">Purine metabolism; AMP biosynthesis via de novo pathway; AMP from IMP: step 1/2.</text>
</comment>
<comment type="subunit">
    <text evidence="1">Homodimer.</text>
</comment>
<comment type="subcellular location">
    <subcellularLocation>
        <location evidence="1">Cytoplasm</location>
    </subcellularLocation>
</comment>
<comment type="similarity">
    <text evidence="1">Belongs to the adenylosuccinate synthetase family.</text>
</comment>
<feature type="chain" id="PRO_1000000934" description="Adenylosuccinate synthetase">
    <location>
        <begin position="1"/>
        <end position="429"/>
    </location>
</feature>
<feature type="active site" description="Proton acceptor" evidence="1">
    <location>
        <position position="13"/>
    </location>
</feature>
<feature type="active site" description="Proton donor" evidence="1">
    <location>
        <position position="41"/>
    </location>
</feature>
<feature type="binding site" evidence="1">
    <location>
        <begin position="12"/>
        <end position="18"/>
    </location>
    <ligand>
        <name>GTP</name>
        <dbReference type="ChEBI" id="CHEBI:37565"/>
    </ligand>
</feature>
<feature type="binding site" description="in other chain" evidence="1">
    <location>
        <begin position="13"/>
        <end position="16"/>
    </location>
    <ligand>
        <name>IMP</name>
        <dbReference type="ChEBI" id="CHEBI:58053"/>
        <note>ligand shared between dimeric partners</note>
    </ligand>
</feature>
<feature type="binding site" evidence="1">
    <location>
        <position position="13"/>
    </location>
    <ligand>
        <name>Mg(2+)</name>
        <dbReference type="ChEBI" id="CHEBI:18420"/>
    </ligand>
</feature>
<feature type="binding site" description="in other chain" evidence="1">
    <location>
        <begin position="38"/>
        <end position="41"/>
    </location>
    <ligand>
        <name>IMP</name>
        <dbReference type="ChEBI" id="CHEBI:58053"/>
        <note>ligand shared between dimeric partners</note>
    </ligand>
</feature>
<feature type="binding site" evidence="1">
    <location>
        <begin position="40"/>
        <end position="42"/>
    </location>
    <ligand>
        <name>GTP</name>
        <dbReference type="ChEBI" id="CHEBI:37565"/>
    </ligand>
</feature>
<feature type="binding site" evidence="1">
    <location>
        <position position="40"/>
    </location>
    <ligand>
        <name>Mg(2+)</name>
        <dbReference type="ChEBI" id="CHEBI:18420"/>
    </ligand>
</feature>
<feature type="binding site" description="in other chain" evidence="1">
    <location>
        <position position="130"/>
    </location>
    <ligand>
        <name>IMP</name>
        <dbReference type="ChEBI" id="CHEBI:58053"/>
        <note>ligand shared between dimeric partners</note>
    </ligand>
</feature>
<feature type="binding site" evidence="1">
    <location>
        <position position="144"/>
    </location>
    <ligand>
        <name>IMP</name>
        <dbReference type="ChEBI" id="CHEBI:58053"/>
        <note>ligand shared between dimeric partners</note>
    </ligand>
</feature>
<feature type="binding site" description="in other chain" evidence="1">
    <location>
        <position position="225"/>
    </location>
    <ligand>
        <name>IMP</name>
        <dbReference type="ChEBI" id="CHEBI:58053"/>
        <note>ligand shared between dimeric partners</note>
    </ligand>
</feature>
<feature type="binding site" description="in other chain" evidence="1">
    <location>
        <position position="240"/>
    </location>
    <ligand>
        <name>IMP</name>
        <dbReference type="ChEBI" id="CHEBI:58053"/>
        <note>ligand shared between dimeric partners</note>
    </ligand>
</feature>
<feature type="binding site" evidence="1">
    <location>
        <begin position="300"/>
        <end position="306"/>
    </location>
    <ligand>
        <name>substrate</name>
    </ligand>
</feature>
<feature type="binding site" description="in other chain" evidence="1">
    <location>
        <position position="304"/>
    </location>
    <ligand>
        <name>IMP</name>
        <dbReference type="ChEBI" id="CHEBI:58053"/>
        <note>ligand shared between dimeric partners</note>
    </ligand>
</feature>
<feature type="binding site" evidence="1">
    <location>
        <position position="306"/>
    </location>
    <ligand>
        <name>GTP</name>
        <dbReference type="ChEBI" id="CHEBI:37565"/>
    </ligand>
</feature>
<feature type="binding site" evidence="1">
    <location>
        <begin position="332"/>
        <end position="334"/>
    </location>
    <ligand>
        <name>GTP</name>
        <dbReference type="ChEBI" id="CHEBI:37565"/>
    </ligand>
</feature>
<feature type="binding site" evidence="1">
    <location>
        <begin position="414"/>
        <end position="416"/>
    </location>
    <ligand>
        <name>GTP</name>
        <dbReference type="ChEBI" id="CHEBI:37565"/>
    </ligand>
</feature>